<protein>
    <recommendedName>
        <fullName>Uncharacterized protein y4oC</fullName>
    </recommendedName>
</protein>
<keyword id="KW-0614">Plasmid</keyword>
<keyword id="KW-1185">Reference proteome</keyword>
<feature type="chain" id="PRO_0000200924" description="Uncharacterized protein y4oC">
    <location>
        <begin position="1"/>
        <end position="230"/>
    </location>
</feature>
<sequence>MDEVAIKDEFYRLIPSRFPPVAVYEGLVSEDKIEALVEIENKTNPRLQSEGRLLSAHTDPRAPRLQNWNLAPFKYLNPEGIRFFDGSRPALELADDRQTALAMSVERRQAFLSRTKEAPIGLDMRLLKTPVSGRFIDFRKYPIDLSCEERWRLGGSVPEGADGVIYHPPERPSAICIAVLRGDVLGRTIQTVHYRYVWNGTRISLLYAFDDAGNEIRPEVLGGADDAFAV</sequence>
<gene>
    <name type="ordered locus">NGR_a02260</name>
    <name type="ORF">y4oC</name>
</gene>
<geneLocation type="plasmid">
    <name>sym pNGR234a</name>
</geneLocation>
<reference key="1">
    <citation type="journal article" date="1997" name="Nature">
        <title>Molecular basis of symbiosis between Rhizobium and legumes.</title>
        <authorList>
            <person name="Freiberg C.A."/>
            <person name="Fellay R."/>
            <person name="Bairoch A."/>
            <person name="Broughton W.J."/>
            <person name="Rosenthal A."/>
            <person name="Perret X."/>
        </authorList>
    </citation>
    <scope>NUCLEOTIDE SEQUENCE [LARGE SCALE GENOMIC DNA]</scope>
    <source>
        <strain>NBRC 101917 / NGR234</strain>
    </source>
</reference>
<reference key="2">
    <citation type="journal article" date="2009" name="Appl. Environ. Microbiol.">
        <title>Rhizobium sp. strain NGR234 possesses a remarkable number of secretion systems.</title>
        <authorList>
            <person name="Schmeisser C."/>
            <person name="Liesegang H."/>
            <person name="Krysciak D."/>
            <person name="Bakkou N."/>
            <person name="Le Quere A."/>
            <person name="Wollherr A."/>
            <person name="Heinemeyer I."/>
            <person name="Morgenstern B."/>
            <person name="Pommerening-Roeser A."/>
            <person name="Flores M."/>
            <person name="Palacios R."/>
            <person name="Brenner S."/>
            <person name="Gottschalk G."/>
            <person name="Schmitz R.A."/>
            <person name="Broughton W.J."/>
            <person name="Perret X."/>
            <person name="Strittmatter A.W."/>
            <person name="Streit W.R."/>
        </authorList>
    </citation>
    <scope>NUCLEOTIDE SEQUENCE [LARGE SCALE GENOMIC DNA]</scope>
    <source>
        <strain>NBRC 101917 / NGR234</strain>
    </source>
</reference>
<name>Y4OC_SINFN</name>
<organism>
    <name type="scientific">Sinorhizobium fredii (strain NBRC 101917 / NGR234)</name>
    <dbReference type="NCBI Taxonomy" id="394"/>
    <lineage>
        <taxon>Bacteria</taxon>
        <taxon>Pseudomonadati</taxon>
        <taxon>Pseudomonadota</taxon>
        <taxon>Alphaproteobacteria</taxon>
        <taxon>Hyphomicrobiales</taxon>
        <taxon>Rhizobiaceae</taxon>
        <taxon>Sinorhizobium/Ensifer group</taxon>
        <taxon>Sinorhizobium</taxon>
    </lineage>
</organism>
<dbReference type="EMBL" id="U00090">
    <property type="protein sequence ID" value="AAB91796.1"/>
    <property type="molecule type" value="Genomic_DNA"/>
</dbReference>
<dbReference type="RefSeq" id="NP_443999.1">
    <property type="nucleotide sequence ID" value="NC_000914.2"/>
</dbReference>
<dbReference type="RefSeq" id="WP_010875253.1">
    <property type="nucleotide sequence ID" value="NC_000914.2"/>
</dbReference>
<dbReference type="SMR" id="P55588"/>
<dbReference type="KEGG" id="rhi:NGR_a02260"/>
<dbReference type="eggNOG" id="COG5654">
    <property type="taxonomic scope" value="Bacteria"/>
</dbReference>
<dbReference type="HOGENOM" id="CLU_074555_1_0_5"/>
<dbReference type="OrthoDB" id="9795903at2"/>
<dbReference type="Proteomes" id="UP000001054">
    <property type="component" value="Plasmid pNGR234a"/>
</dbReference>
<dbReference type="InterPro" id="IPR014914">
    <property type="entry name" value="RES_dom"/>
</dbReference>
<dbReference type="Pfam" id="PF08808">
    <property type="entry name" value="RES"/>
    <property type="match status" value="1"/>
</dbReference>
<proteinExistence type="predicted"/>
<accession>P55588</accession>